<protein>
    <recommendedName>
        <fullName>Uncharacterized polyferredoxin-like protein MJ0514</fullName>
    </recommendedName>
</protein>
<feature type="chain" id="PRO_0000159148" description="Uncharacterized polyferredoxin-like protein MJ0514">
    <location>
        <begin position="1"/>
        <end position="250"/>
    </location>
</feature>
<feature type="domain" description="4Fe-4S ferredoxin-type 1" evidence="2">
    <location>
        <begin position="38"/>
        <end position="67"/>
    </location>
</feature>
<feature type="domain" description="4Fe-4S ferredoxin-type 2" evidence="2">
    <location>
        <begin position="69"/>
        <end position="98"/>
    </location>
</feature>
<feature type="domain" description="4Fe-4S ferredoxin-type 3" evidence="2">
    <location>
        <begin position="124"/>
        <end position="153"/>
    </location>
</feature>
<feature type="domain" description="4Fe-4S ferredoxin-type 4" evidence="2">
    <location>
        <begin position="154"/>
        <end position="183"/>
    </location>
</feature>
<feature type="domain" description="4Fe-4S ferredoxin-type 5" evidence="2">
    <location>
        <begin position="191"/>
        <end position="220"/>
    </location>
</feature>
<feature type="domain" description="4Fe-4S ferredoxin-type 6" evidence="2">
    <location>
        <begin position="220"/>
        <end position="249"/>
    </location>
</feature>
<feature type="binding site" evidence="1">
    <location>
        <position position="47"/>
    </location>
    <ligand>
        <name>[4Fe-4S] cluster</name>
        <dbReference type="ChEBI" id="CHEBI:49883"/>
    </ligand>
</feature>
<feature type="binding site" evidence="1">
    <location>
        <position position="50"/>
    </location>
    <ligand>
        <name>[4Fe-4S] cluster</name>
        <dbReference type="ChEBI" id="CHEBI:49883"/>
    </ligand>
</feature>
<feature type="binding site" evidence="1">
    <location>
        <position position="53"/>
    </location>
    <ligand>
        <name>[4Fe-4S] cluster</name>
        <dbReference type="ChEBI" id="CHEBI:49883"/>
    </ligand>
</feature>
<feature type="binding site" evidence="1">
    <location>
        <position position="57"/>
    </location>
    <ligand>
        <name>[4Fe-4S] cluster</name>
        <dbReference type="ChEBI" id="CHEBI:49883"/>
    </ligand>
</feature>
<feature type="binding site" evidence="1">
    <location>
        <position position="78"/>
    </location>
    <ligand>
        <name>[4Fe-4S] cluster</name>
        <dbReference type="ChEBI" id="CHEBI:49883"/>
    </ligand>
</feature>
<feature type="binding site" evidence="1">
    <location>
        <position position="81"/>
    </location>
    <ligand>
        <name>[4Fe-4S] cluster</name>
        <dbReference type="ChEBI" id="CHEBI:49883"/>
    </ligand>
</feature>
<feature type="binding site" evidence="1">
    <location>
        <position position="84"/>
    </location>
    <ligand>
        <name>[4Fe-4S] cluster</name>
        <dbReference type="ChEBI" id="CHEBI:49883"/>
    </ligand>
</feature>
<feature type="binding site" evidence="1">
    <location>
        <position position="88"/>
    </location>
    <ligand>
        <name>[4Fe-4S] cluster</name>
        <dbReference type="ChEBI" id="CHEBI:49883"/>
    </ligand>
</feature>
<feature type="binding site" evidence="1">
    <location>
        <position position="133"/>
    </location>
    <ligand>
        <name>[4Fe-4S] cluster</name>
        <dbReference type="ChEBI" id="CHEBI:49883"/>
    </ligand>
</feature>
<feature type="binding site" evidence="1">
    <location>
        <position position="136"/>
    </location>
    <ligand>
        <name>[4Fe-4S] cluster</name>
        <dbReference type="ChEBI" id="CHEBI:49883"/>
    </ligand>
</feature>
<feature type="binding site" evidence="1">
    <location>
        <position position="139"/>
    </location>
    <ligand>
        <name>[4Fe-4S] cluster</name>
        <dbReference type="ChEBI" id="CHEBI:49883"/>
    </ligand>
</feature>
<feature type="binding site" evidence="1">
    <location>
        <position position="143"/>
    </location>
    <ligand>
        <name>[4Fe-4S] cluster</name>
        <dbReference type="ChEBI" id="CHEBI:49883"/>
    </ligand>
</feature>
<feature type="binding site" evidence="1">
    <location>
        <position position="163"/>
    </location>
    <ligand>
        <name>[4Fe-4S] cluster</name>
        <dbReference type="ChEBI" id="CHEBI:49883"/>
    </ligand>
</feature>
<feature type="binding site" evidence="1">
    <location>
        <position position="166"/>
    </location>
    <ligand>
        <name>[4Fe-4S] cluster</name>
        <dbReference type="ChEBI" id="CHEBI:49883"/>
    </ligand>
</feature>
<feature type="binding site" evidence="1">
    <location>
        <position position="169"/>
    </location>
    <ligand>
        <name>[4Fe-4S] cluster</name>
        <dbReference type="ChEBI" id="CHEBI:49883"/>
    </ligand>
</feature>
<feature type="binding site" evidence="1">
    <location>
        <position position="173"/>
    </location>
    <ligand>
        <name>[4Fe-4S] cluster</name>
        <dbReference type="ChEBI" id="CHEBI:49883"/>
    </ligand>
</feature>
<feature type="binding site" evidence="1">
    <location>
        <position position="200"/>
    </location>
    <ligand>
        <name>[4Fe-4S] cluster</name>
        <dbReference type="ChEBI" id="CHEBI:49883"/>
    </ligand>
</feature>
<feature type="binding site" evidence="1">
    <location>
        <position position="203"/>
    </location>
    <ligand>
        <name>[4Fe-4S] cluster</name>
        <dbReference type="ChEBI" id="CHEBI:49883"/>
    </ligand>
</feature>
<feature type="binding site" evidence="1">
    <location>
        <position position="206"/>
    </location>
    <ligand>
        <name>[4Fe-4S] cluster</name>
        <dbReference type="ChEBI" id="CHEBI:49883"/>
    </ligand>
</feature>
<feature type="binding site" evidence="1">
    <location>
        <position position="210"/>
    </location>
    <ligand>
        <name>[4Fe-4S] cluster</name>
        <dbReference type="ChEBI" id="CHEBI:49883"/>
    </ligand>
</feature>
<feature type="binding site" evidence="1">
    <location>
        <position position="229"/>
    </location>
    <ligand>
        <name>[4Fe-4S] cluster</name>
        <dbReference type="ChEBI" id="CHEBI:49883"/>
    </ligand>
</feature>
<feature type="binding site" evidence="1">
    <location>
        <position position="232"/>
    </location>
    <ligand>
        <name>[4Fe-4S] cluster</name>
        <dbReference type="ChEBI" id="CHEBI:49883"/>
    </ligand>
</feature>
<feature type="binding site" evidence="1">
    <location>
        <position position="235"/>
    </location>
    <ligand>
        <name>[4Fe-4S] cluster</name>
        <dbReference type="ChEBI" id="CHEBI:49883"/>
    </ligand>
</feature>
<feature type="binding site" evidence="1">
    <location>
        <position position="239"/>
    </location>
    <ligand>
        <name>[4Fe-4S] cluster</name>
        <dbReference type="ChEBI" id="CHEBI:49883"/>
    </ligand>
</feature>
<proteinExistence type="predicted"/>
<keyword id="KW-0004">4Fe-4S</keyword>
<keyword id="KW-0249">Electron transport</keyword>
<keyword id="KW-0408">Iron</keyword>
<keyword id="KW-0411">Iron-sulfur</keyword>
<keyword id="KW-0479">Metal-binding</keyword>
<keyword id="KW-1185">Reference proteome</keyword>
<keyword id="KW-0677">Repeat</keyword>
<keyword id="KW-0813">Transport</keyword>
<accession>Q57934</accession>
<reference key="1">
    <citation type="journal article" date="1996" name="Science">
        <title>Complete genome sequence of the methanogenic archaeon, Methanococcus jannaschii.</title>
        <authorList>
            <person name="Bult C.J."/>
            <person name="White O."/>
            <person name="Olsen G.J."/>
            <person name="Zhou L."/>
            <person name="Fleischmann R.D."/>
            <person name="Sutton G.G."/>
            <person name="Blake J.A."/>
            <person name="FitzGerald L.M."/>
            <person name="Clayton R.A."/>
            <person name="Gocayne J.D."/>
            <person name="Kerlavage A.R."/>
            <person name="Dougherty B.A."/>
            <person name="Tomb J.-F."/>
            <person name="Adams M.D."/>
            <person name="Reich C.I."/>
            <person name="Overbeek R."/>
            <person name="Kirkness E.F."/>
            <person name="Weinstock K.G."/>
            <person name="Merrick J.M."/>
            <person name="Glodek A."/>
            <person name="Scott J.L."/>
            <person name="Geoghagen N.S.M."/>
            <person name="Weidman J.F."/>
            <person name="Fuhrmann J.L."/>
            <person name="Nguyen D."/>
            <person name="Utterback T.R."/>
            <person name="Kelley J.M."/>
            <person name="Peterson J.D."/>
            <person name="Sadow P.W."/>
            <person name="Hanna M.C."/>
            <person name="Cotton M.D."/>
            <person name="Roberts K.M."/>
            <person name="Hurst M.A."/>
            <person name="Kaine B.P."/>
            <person name="Borodovsky M."/>
            <person name="Klenk H.-P."/>
            <person name="Fraser C.M."/>
            <person name="Smith H.O."/>
            <person name="Woese C.R."/>
            <person name="Venter J.C."/>
        </authorList>
    </citation>
    <scope>NUCLEOTIDE SEQUENCE [LARGE SCALE GENOMIC DNA]</scope>
    <source>
        <strain>ATCC 43067 / DSM 2661 / JAL-1 / JCM 10045 / NBRC 100440</strain>
    </source>
</reference>
<evidence type="ECO:0000255" key="1"/>
<evidence type="ECO:0000255" key="2">
    <source>
        <dbReference type="PROSITE-ProRule" id="PRU00711"/>
    </source>
</evidence>
<dbReference type="EMBL" id="L77117">
    <property type="protein sequence ID" value="AAB98503.1"/>
    <property type="molecule type" value="Genomic_DNA"/>
</dbReference>
<dbReference type="PIR" id="B64364">
    <property type="entry name" value="B64364"/>
</dbReference>
<dbReference type="RefSeq" id="WP_010870015.1">
    <property type="nucleotide sequence ID" value="NC_000909.1"/>
</dbReference>
<dbReference type="STRING" id="243232.MJ_0514"/>
<dbReference type="PaxDb" id="243232-MJ_0514"/>
<dbReference type="EnsemblBacteria" id="AAB98503">
    <property type="protein sequence ID" value="AAB98503"/>
    <property type="gene ID" value="MJ_0514"/>
</dbReference>
<dbReference type="GeneID" id="1451376"/>
<dbReference type="KEGG" id="mja:MJ_0514"/>
<dbReference type="eggNOG" id="arCOG02179">
    <property type="taxonomic scope" value="Archaea"/>
</dbReference>
<dbReference type="HOGENOM" id="CLU_097041_0_0_2"/>
<dbReference type="InParanoid" id="Q57934"/>
<dbReference type="OrthoDB" id="23833at2157"/>
<dbReference type="PhylomeDB" id="Q57934"/>
<dbReference type="Proteomes" id="UP000000805">
    <property type="component" value="Chromosome"/>
</dbReference>
<dbReference type="GO" id="GO:0051539">
    <property type="term" value="F:4 iron, 4 sulfur cluster binding"/>
    <property type="evidence" value="ECO:0007669"/>
    <property type="project" value="UniProtKB-KW"/>
</dbReference>
<dbReference type="GO" id="GO:0046872">
    <property type="term" value="F:metal ion binding"/>
    <property type="evidence" value="ECO:0007669"/>
    <property type="project" value="UniProtKB-KW"/>
</dbReference>
<dbReference type="GO" id="GO:0016491">
    <property type="term" value="F:oxidoreductase activity"/>
    <property type="evidence" value="ECO:0007669"/>
    <property type="project" value="UniProtKB-ARBA"/>
</dbReference>
<dbReference type="CDD" id="cd10549">
    <property type="entry name" value="MtMvhB_like"/>
    <property type="match status" value="2"/>
</dbReference>
<dbReference type="Gene3D" id="3.30.70.20">
    <property type="match status" value="3"/>
</dbReference>
<dbReference type="Gene3D" id="3.30.70.3270">
    <property type="match status" value="1"/>
</dbReference>
<dbReference type="InterPro" id="IPR017896">
    <property type="entry name" value="4Fe4S_Fe-S-bd"/>
</dbReference>
<dbReference type="InterPro" id="IPR017900">
    <property type="entry name" value="4Fe4S_Fe_S_CS"/>
</dbReference>
<dbReference type="InterPro" id="IPR050572">
    <property type="entry name" value="Fe-S_Ferredoxin"/>
</dbReference>
<dbReference type="PANTHER" id="PTHR43687">
    <property type="entry name" value="ADENYLYLSULFATE REDUCTASE, BETA SUBUNIT"/>
    <property type="match status" value="1"/>
</dbReference>
<dbReference type="PANTHER" id="PTHR43687:SF1">
    <property type="entry name" value="FERREDOXIN III"/>
    <property type="match status" value="1"/>
</dbReference>
<dbReference type="Pfam" id="PF00037">
    <property type="entry name" value="Fer4"/>
    <property type="match status" value="2"/>
</dbReference>
<dbReference type="Pfam" id="PF14697">
    <property type="entry name" value="Fer4_21"/>
    <property type="match status" value="2"/>
</dbReference>
<dbReference type="SUPFAM" id="SSF54862">
    <property type="entry name" value="4Fe-4S ferredoxins"/>
    <property type="match status" value="2"/>
</dbReference>
<dbReference type="PROSITE" id="PS00198">
    <property type="entry name" value="4FE4S_FER_1"/>
    <property type="match status" value="6"/>
</dbReference>
<dbReference type="PROSITE" id="PS51379">
    <property type="entry name" value="4FE4S_FER_2"/>
    <property type="match status" value="6"/>
</dbReference>
<sequence>MITLIEIKKSLDEILSKIDGDKKYINEVAKKITPITYKLLYINETKCIRCNLCYKECPVDAIEKAKVKKSAKIIEDKCVKCEICAQTCPVGAIYVIEGRAEIEDSEVHYTIKEKSIPHRKIRLKKYELDENTCIKCGICARFCPTNAIKAVRRKSIEVNLDLCMGCGACAEVCPKKCIKVERELGEVIKTRDIEVDKNLCVGCLVCIEECPINAIDQDGDKVKINKDKCILCGRCVDVCPTNAIKMWEKK</sequence>
<gene>
    <name type="ordered locus">MJ0514</name>
</gene>
<name>Y514_METJA</name>
<organism>
    <name type="scientific">Methanocaldococcus jannaschii (strain ATCC 43067 / DSM 2661 / JAL-1 / JCM 10045 / NBRC 100440)</name>
    <name type="common">Methanococcus jannaschii</name>
    <dbReference type="NCBI Taxonomy" id="243232"/>
    <lineage>
        <taxon>Archaea</taxon>
        <taxon>Methanobacteriati</taxon>
        <taxon>Methanobacteriota</taxon>
        <taxon>Methanomada group</taxon>
        <taxon>Methanococci</taxon>
        <taxon>Methanococcales</taxon>
        <taxon>Methanocaldococcaceae</taxon>
        <taxon>Methanocaldococcus</taxon>
    </lineage>
</organism>